<reference key="1">
    <citation type="journal article" date="2001" name="Nature">
        <title>Genome sequence and gene compaction of the eukaryote parasite Encephalitozoon cuniculi.</title>
        <authorList>
            <person name="Katinka M.D."/>
            <person name="Duprat S."/>
            <person name="Cornillot E."/>
            <person name="Metenier G."/>
            <person name="Thomarat F."/>
            <person name="Prensier G."/>
            <person name="Barbe V."/>
            <person name="Peyretaillade E."/>
            <person name="Brottier P."/>
            <person name="Wincker P."/>
            <person name="Delbac F."/>
            <person name="El Alaoui H."/>
            <person name="Peyret P."/>
            <person name="Saurin W."/>
            <person name="Gouy M."/>
            <person name="Weissenbach J."/>
            <person name="Vivares C.P."/>
        </authorList>
    </citation>
    <scope>NUCLEOTIDE SEQUENCE [LARGE SCALE GENOMIC DNA]</scope>
    <source>
        <strain>GB-M1</strain>
    </source>
</reference>
<reference key="2">
    <citation type="journal article" date="2007" name="BMC Genomics">
        <title>The complement of protein kinases of the microsporidium Encephalitozoon cuniculi in relation to those of Saccharomyces cerevisiae and Schizosaccharomyces pombe.</title>
        <authorList>
            <person name="Miranda-Saavedra D."/>
            <person name="Stark M.J.R."/>
            <person name="Packer J.C."/>
            <person name="Vivares C.P."/>
            <person name="Doerig C."/>
            <person name="Barton G.J."/>
        </authorList>
    </citation>
    <scope>PREDICTION OF FUNCTION</scope>
</reference>
<comment type="function">
    <text evidence="1">May play a role in the control of the eukaryotic cell cycle.</text>
</comment>
<comment type="catalytic activity">
    <reaction>
        <text>L-seryl-[protein] + ATP = O-phospho-L-seryl-[protein] + ADP + H(+)</text>
        <dbReference type="Rhea" id="RHEA:17989"/>
        <dbReference type="Rhea" id="RHEA-COMP:9863"/>
        <dbReference type="Rhea" id="RHEA-COMP:11604"/>
        <dbReference type="ChEBI" id="CHEBI:15378"/>
        <dbReference type="ChEBI" id="CHEBI:29999"/>
        <dbReference type="ChEBI" id="CHEBI:30616"/>
        <dbReference type="ChEBI" id="CHEBI:83421"/>
        <dbReference type="ChEBI" id="CHEBI:456216"/>
        <dbReference type="EC" id="2.7.11.22"/>
    </reaction>
</comment>
<comment type="catalytic activity">
    <reaction>
        <text>L-threonyl-[protein] + ATP = O-phospho-L-threonyl-[protein] + ADP + H(+)</text>
        <dbReference type="Rhea" id="RHEA:46608"/>
        <dbReference type="Rhea" id="RHEA-COMP:11060"/>
        <dbReference type="Rhea" id="RHEA-COMP:11605"/>
        <dbReference type="ChEBI" id="CHEBI:15378"/>
        <dbReference type="ChEBI" id="CHEBI:30013"/>
        <dbReference type="ChEBI" id="CHEBI:30616"/>
        <dbReference type="ChEBI" id="CHEBI:61977"/>
        <dbReference type="ChEBI" id="CHEBI:456216"/>
        <dbReference type="EC" id="2.7.11.22"/>
    </reaction>
</comment>
<comment type="subcellular location">
    <subcellularLocation>
        <location evidence="4">Nucleus</location>
    </subcellularLocation>
</comment>
<comment type="similarity">
    <text evidence="4">Belongs to the protein kinase superfamily. CMGC Ser/Thr protein kinase family. CDC2/CDKX subfamily.</text>
</comment>
<dbReference type="EC" id="2.7.11.22"/>
<dbReference type="EMBL" id="AL590448">
    <property type="protein sequence ID" value="CAD26328.1"/>
    <property type="molecule type" value="Genomic_DNA"/>
</dbReference>
<dbReference type="RefSeq" id="NP_597152.1">
    <property type="nucleotide sequence ID" value="NM_001041761.1"/>
</dbReference>
<dbReference type="SMR" id="Q8SRF5"/>
<dbReference type="STRING" id="284813.Q8SRF5"/>
<dbReference type="GeneID" id="859574"/>
<dbReference type="KEGG" id="ecu:ECU08_0230"/>
<dbReference type="VEuPathDB" id="MicrosporidiaDB:ECU08_0230"/>
<dbReference type="HOGENOM" id="CLU_000288_181_1_1"/>
<dbReference type="InParanoid" id="Q8SRF5"/>
<dbReference type="OMA" id="NWQIFVP"/>
<dbReference type="OrthoDB" id="1732493at2759"/>
<dbReference type="Proteomes" id="UP000000819">
    <property type="component" value="Chromosome VIII"/>
</dbReference>
<dbReference type="GO" id="GO:0005634">
    <property type="term" value="C:nucleus"/>
    <property type="evidence" value="ECO:0007669"/>
    <property type="project" value="UniProtKB-SubCell"/>
</dbReference>
<dbReference type="GO" id="GO:0005524">
    <property type="term" value="F:ATP binding"/>
    <property type="evidence" value="ECO:0007669"/>
    <property type="project" value="UniProtKB-KW"/>
</dbReference>
<dbReference type="GO" id="GO:0004693">
    <property type="term" value="F:cyclin-dependent protein serine/threonine kinase activity"/>
    <property type="evidence" value="ECO:0007669"/>
    <property type="project" value="UniProtKB-EC"/>
</dbReference>
<dbReference type="GO" id="GO:0106310">
    <property type="term" value="F:protein serine kinase activity"/>
    <property type="evidence" value="ECO:0007669"/>
    <property type="project" value="RHEA"/>
</dbReference>
<dbReference type="GO" id="GO:0051301">
    <property type="term" value="P:cell division"/>
    <property type="evidence" value="ECO:0007669"/>
    <property type="project" value="UniProtKB-KW"/>
</dbReference>
<dbReference type="FunFam" id="3.30.200.20:FF:000124">
    <property type="entry name" value="Cyclin-dependent kinase 4"/>
    <property type="match status" value="1"/>
</dbReference>
<dbReference type="FunFam" id="1.10.510.10:FF:000624">
    <property type="entry name" value="Mitogen-activated protein kinase"/>
    <property type="match status" value="1"/>
</dbReference>
<dbReference type="Gene3D" id="3.30.200.20">
    <property type="entry name" value="Phosphorylase Kinase, domain 1"/>
    <property type="match status" value="1"/>
</dbReference>
<dbReference type="Gene3D" id="1.10.510.10">
    <property type="entry name" value="Transferase(Phosphotransferase) domain 1"/>
    <property type="match status" value="1"/>
</dbReference>
<dbReference type="InterPro" id="IPR050108">
    <property type="entry name" value="CDK"/>
</dbReference>
<dbReference type="InterPro" id="IPR011009">
    <property type="entry name" value="Kinase-like_dom_sf"/>
</dbReference>
<dbReference type="InterPro" id="IPR000719">
    <property type="entry name" value="Prot_kinase_dom"/>
</dbReference>
<dbReference type="InterPro" id="IPR017441">
    <property type="entry name" value="Protein_kinase_ATP_BS"/>
</dbReference>
<dbReference type="InterPro" id="IPR008271">
    <property type="entry name" value="Ser/Thr_kinase_AS"/>
</dbReference>
<dbReference type="PANTHER" id="PTHR24056">
    <property type="entry name" value="CELL DIVISION PROTEIN KINASE"/>
    <property type="match status" value="1"/>
</dbReference>
<dbReference type="Pfam" id="PF00069">
    <property type="entry name" value="Pkinase"/>
    <property type="match status" value="1"/>
</dbReference>
<dbReference type="PIRSF" id="PIRSF000654">
    <property type="entry name" value="Integrin-linked_kinase"/>
    <property type="match status" value="1"/>
</dbReference>
<dbReference type="SMART" id="SM00220">
    <property type="entry name" value="S_TKc"/>
    <property type="match status" value="1"/>
</dbReference>
<dbReference type="SUPFAM" id="SSF56112">
    <property type="entry name" value="Protein kinase-like (PK-like)"/>
    <property type="match status" value="1"/>
</dbReference>
<dbReference type="PROSITE" id="PS00107">
    <property type="entry name" value="PROTEIN_KINASE_ATP"/>
    <property type="match status" value="1"/>
</dbReference>
<dbReference type="PROSITE" id="PS50011">
    <property type="entry name" value="PROTEIN_KINASE_DOM"/>
    <property type="match status" value="1"/>
</dbReference>
<dbReference type="PROSITE" id="PS00108">
    <property type="entry name" value="PROTEIN_KINASE_ST"/>
    <property type="match status" value="1"/>
</dbReference>
<sequence>MTRYILGALIGSGTYGEVYEAIDTETKEKVALKRIRLNEKEGMPGTALREISILKKLSHRNIISLVSIIHTDALLTMVFPFIDYELKKYIGMNTGKNIMELVNQLICGVHYLHRMNVVHRDLKPQNILVTSDGVLKIADFGLSRSLEIRVPPYSSEVVTLWYRSPELLMGSTSYRFYVDIWSLGCIIYEMITLEPLFPGESKENQLTLIRRKAGTRRSLRGMVEQRLAVPKFVTEIIVRCLDFNYNQRITADEIMEILENEYGAC</sequence>
<organism>
    <name type="scientific">Encephalitozoon cuniculi (strain GB-M1)</name>
    <name type="common">Microsporidian parasite</name>
    <dbReference type="NCBI Taxonomy" id="284813"/>
    <lineage>
        <taxon>Eukaryota</taxon>
        <taxon>Fungi</taxon>
        <taxon>Fungi incertae sedis</taxon>
        <taxon>Microsporidia</taxon>
        <taxon>Unikaryonidae</taxon>
        <taxon>Encephalitozoon</taxon>
    </lineage>
</organism>
<name>Y823_ENCCU</name>
<protein>
    <recommendedName>
        <fullName>Probable cell division protein kinase ECU08_0230</fullName>
        <ecNumber>2.7.11.22</ecNumber>
    </recommendedName>
</protein>
<gene>
    <name type="ordered locus">ECU08_0230</name>
</gene>
<feature type="chain" id="PRO_0000385505" description="Probable cell division protein kinase ECU08_0230">
    <location>
        <begin position="1"/>
        <end position="265"/>
    </location>
</feature>
<feature type="domain" description="Protein kinase" evidence="2">
    <location>
        <begin position="4"/>
        <end position="263"/>
    </location>
</feature>
<feature type="active site" description="Proton acceptor" evidence="2 3">
    <location>
        <position position="121"/>
    </location>
</feature>
<feature type="binding site" evidence="2">
    <location>
        <begin position="10"/>
        <end position="18"/>
    </location>
    <ligand>
        <name>ATP</name>
        <dbReference type="ChEBI" id="CHEBI:30616"/>
    </ligand>
</feature>
<feature type="binding site" evidence="2">
    <location>
        <position position="33"/>
    </location>
    <ligand>
        <name>ATP</name>
        <dbReference type="ChEBI" id="CHEBI:30616"/>
    </ligand>
</feature>
<evidence type="ECO:0000250" key="1"/>
<evidence type="ECO:0000255" key="2">
    <source>
        <dbReference type="PROSITE-ProRule" id="PRU00159"/>
    </source>
</evidence>
<evidence type="ECO:0000255" key="3">
    <source>
        <dbReference type="PROSITE-ProRule" id="PRU10027"/>
    </source>
</evidence>
<evidence type="ECO:0000305" key="4"/>
<keyword id="KW-0067">ATP-binding</keyword>
<keyword id="KW-0131">Cell cycle</keyword>
<keyword id="KW-0132">Cell division</keyword>
<keyword id="KW-0418">Kinase</keyword>
<keyword id="KW-0498">Mitosis</keyword>
<keyword id="KW-0547">Nucleotide-binding</keyword>
<keyword id="KW-0539">Nucleus</keyword>
<keyword id="KW-1185">Reference proteome</keyword>
<keyword id="KW-0723">Serine/threonine-protein kinase</keyword>
<keyword id="KW-0808">Transferase</keyword>
<proteinExistence type="inferred from homology"/>
<accession>Q8SRF5</accession>